<sequence>MTRKVSRRLQELQKKVEDRAYEPLAALNLLKETATAKFPESAEAHIRLGIDPKYTDQQLRTTVALPKGTGQTIRVAVIARGEKVAEAKAAGADIAGSEELIEEISKGFLDFDLLIATPDVMPQVAKLGRQLGPRGLMPSPKGGTVTFDLEQAINEFKAGKLEFRADRTGIVHVLFGKASFSADDLLANLKALQETIDRNRPSGAKGRYWRSVYISATMGPAIEVDINALRDLKLAEA</sequence>
<organism>
    <name type="scientific">Synechococcus elongatus (strain ATCC 33912 / PCC 7942 / FACHB-805)</name>
    <name type="common">Anacystis nidulans R2</name>
    <dbReference type="NCBI Taxonomy" id="1140"/>
    <lineage>
        <taxon>Bacteria</taxon>
        <taxon>Bacillati</taxon>
        <taxon>Cyanobacteriota</taxon>
        <taxon>Cyanophyceae</taxon>
        <taxon>Synechococcales</taxon>
        <taxon>Synechococcaceae</taxon>
        <taxon>Synechococcus</taxon>
    </lineage>
</organism>
<protein>
    <recommendedName>
        <fullName evidence="1">Large ribosomal subunit protein uL1</fullName>
    </recommendedName>
    <alternativeName>
        <fullName evidence="2">50S ribosomal protein L1</fullName>
    </alternativeName>
</protein>
<evidence type="ECO:0000255" key="1">
    <source>
        <dbReference type="HAMAP-Rule" id="MF_01318"/>
    </source>
</evidence>
<evidence type="ECO:0000305" key="2"/>
<feature type="chain" id="PRO_0000308129" description="Large ribosomal subunit protein uL1">
    <location>
        <begin position="1"/>
        <end position="237"/>
    </location>
</feature>
<name>RL1_SYNE7</name>
<reference key="1">
    <citation type="submission" date="2005-08" db="EMBL/GenBank/DDBJ databases">
        <title>Complete sequence of chromosome 1 of Synechococcus elongatus PCC 7942.</title>
        <authorList>
            <consortium name="US DOE Joint Genome Institute"/>
            <person name="Copeland A."/>
            <person name="Lucas S."/>
            <person name="Lapidus A."/>
            <person name="Barry K."/>
            <person name="Detter J.C."/>
            <person name="Glavina T."/>
            <person name="Hammon N."/>
            <person name="Israni S."/>
            <person name="Pitluck S."/>
            <person name="Schmutz J."/>
            <person name="Larimer F."/>
            <person name="Land M."/>
            <person name="Kyrpides N."/>
            <person name="Lykidis A."/>
            <person name="Golden S."/>
            <person name="Richardson P."/>
        </authorList>
    </citation>
    <scope>NUCLEOTIDE SEQUENCE [LARGE SCALE GENOMIC DNA]</scope>
    <source>
        <strain>ATCC 33912 / PCC 7942 / FACHB-805</strain>
    </source>
</reference>
<accession>Q31QK4</accession>
<gene>
    <name evidence="1" type="primary">rplA</name>
    <name evidence="1" type="synonym">rpl1</name>
    <name type="ordered locus">Synpcc7942_0633</name>
</gene>
<proteinExistence type="inferred from homology"/>
<keyword id="KW-1185">Reference proteome</keyword>
<keyword id="KW-0678">Repressor</keyword>
<keyword id="KW-0687">Ribonucleoprotein</keyword>
<keyword id="KW-0689">Ribosomal protein</keyword>
<keyword id="KW-0694">RNA-binding</keyword>
<keyword id="KW-0699">rRNA-binding</keyword>
<keyword id="KW-0810">Translation regulation</keyword>
<keyword id="KW-0820">tRNA-binding</keyword>
<dbReference type="EMBL" id="CP000100">
    <property type="protein sequence ID" value="ABB56665.1"/>
    <property type="molecule type" value="Genomic_DNA"/>
</dbReference>
<dbReference type="RefSeq" id="WP_011377655.1">
    <property type="nucleotide sequence ID" value="NZ_JACJTX010000006.1"/>
</dbReference>
<dbReference type="SMR" id="Q31QK4"/>
<dbReference type="STRING" id="1140.Synpcc7942_0633"/>
<dbReference type="PaxDb" id="1140-Synpcc7942_0633"/>
<dbReference type="GeneID" id="72429466"/>
<dbReference type="KEGG" id="syf:Synpcc7942_0633"/>
<dbReference type="eggNOG" id="COG0081">
    <property type="taxonomic scope" value="Bacteria"/>
</dbReference>
<dbReference type="HOGENOM" id="CLU_062853_0_0_3"/>
<dbReference type="OrthoDB" id="9803740at2"/>
<dbReference type="BioCyc" id="SYNEL:SYNPCC7942_0633-MONOMER"/>
<dbReference type="Proteomes" id="UP000889800">
    <property type="component" value="Chromosome"/>
</dbReference>
<dbReference type="GO" id="GO:0015934">
    <property type="term" value="C:large ribosomal subunit"/>
    <property type="evidence" value="ECO:0007669"/>
    <property type="project" value="InterPro"/>
</dbReference>
<dbReference type="GO" id="GO:0019843">
    <property type="term" value="F:rRNA binding"/>
    <property type="evidence" value="ECO:0007669"/>
    <property type="project" value="UniProtKB-UniRule"/>
</dbReference>
<dbReference type="GO" id="GO:0003735">
    <property type="term" value="F:structural constituent of ribosome"/>
    <property type="evidence" value="ECO:0007669"/>
    <property type="project" value="InterPro"/>
</dbReference>
<dbReference type="GO" id="GO:0000049">
    <property type="term" value="F:tRNA binding"/>
    <property type="evidence" value="ECO:0007669"/>
    <property type="project" value="UniProtKB-KW"/>
</dbReference>
<dbReference type="GO" id="GO:0006417">
    <property type="term" value="P:regulation of translation"/>
    <property type="evidence" value="ECO:0007669"/>
    <property type="project" value="UniProtKB-KW"/>
</dbReference>
<dbReference type="GO" id="GO:0006412">
    <property type="term" value="P:translation"/>
    <property type="evidence" value="ECO:0007669"/>
    <property type="project" value="UniProtKB-UniRule"/>
</dbReference>
<dbReference type="CDD" id="cd00403">
    <property type="entry name" value="Ribosomal_L1"/>
    <property type="match status" value="1"/>
</dbReference>
<dbReference type="FunFam" id="3.40.50.790:FF:000001">
    <property type="entry name" value="50S ribosomal protein L1"/>
    <property type="match status" value="1"/>
</dbReference>
<dbReference type="Gene3D" id="3.30.190.20">
    <property type="match status" value="1"/>
</dbReference>
<dbReference type="Gene3D" id="3.40.50.790">
    <property type="match status" value="1"/>
</dbReference>
<dbReference type="HAMAP" id="MF_01318_B">
    <property type="entry name" value="Ribosomal_uL1_B"/>
    <property type="match status" value="1"/>
</dbReference>
<dbReference type="InterPro" id="IPR005878">
    <property type="entry name" value="Ribosom_uL1_bac-type"/>
</dbReference>
<dbReference type="InterPro" id="IPR002143">
    <property type="entry name" value="Ribosomal_uL1"/>
</dbReference>
<dbReference type="InterPro" id="IPR023674">
    <property type="entry name" value="Ribosomal_uL1-like"/>
</dbReference>
<dbReference type="InterPro" id="IPR028364">
    <property type="entry name" value="Ribosomal_uL1/biogenesis"/>
</dbReference>
<dbReference type="InterPro" id="IPR016095">
    <property type="entry name" value="Ribosomal_uL1_3-a/b-sand"/>
</dbReference>
<dbReference type="InterPro" id="IPR023673">
    <property type="entry name" value="Ribosomal_uL1_CS"/>
</dbReference>
<dbReference type="NCBIfam" id="TIGR01169">
    <property type="entry name" value="rplA_bact"/>
    <property type="match status" value="1"/>
</dbReference>
<dbReference type="PANTHER" id="PTHR36427">
    <property type="entry name" value="54S RIBOSOMAL PROTEIN L1, MITOCHONDRIAL"/>
    <property type="match status" value="1"/>
</dbReference>
<dbReference type="PANTHER" id="PTHR36427:SF3">
    <property type="entry name" value="LARGE RIBOSOMAL SUBUNIT PROTEIN UL1M"/>
    <property type="match status" value="1"/>
</dbReference>
<dbReference type="Pfam" id="PF00687">
    <property type="entry name" value="Ribosomal_L1"/>
    <property type="match status" value="1"/>
</dbReference>
<dbReference type="PIRSF" id="PIRSF002155">
    <property type="entry name" value="Ribosomal_L1"/>
    <property type="match status" value="1"/>
</dbReference>
<dbReference type="SUPFAM" id="SSF56808">
    <property type="entry name" value="Ribosomal protein L1"/>
    <property type="match status" value="1"/>
</dbReference>
<dbReference type="PROSITE" id="PS01199">
    <property type="entry name" value="RIBOSOMAL_L1"/>
    <property type="match status" value="1"/>
</dbReference>
<comment type="function">
    <text evidence="1">Binds directly to 23S rRNA. The L1 stalk is quite mobile in the ribosome, and is involved in E site tRNA release.</text>
</comment>
<comment type="function">
    <text evidence="1">Protein L1 is also a translational repressor protein, it controls the translation of the L11 operon by binding to its mRNA.</text>
</comment>
<comment type="subunit">
    <text evidence="1">Part of the 50S ribosomal subunit.</text>
</comment>
<comment type="similarity">
    <text evidence="1">Belongs to the universal ribosomal protein uL1 family.</text>
</comment>